<proteinExistence type="evidence at protein level"/>
<organism>
    <name type="scientific">Homo sapiens</name>
    <name type="common">Human</name>
    <dbReference type="NCBI Taxonomy" id="9606"/>
    <lineage>
        <taxon>Eukaryota</taxon>
        <taxon>Metazoa</taxon>
        <taxon>Chordata</taxon>
        <taxon>Craniata</taxon>
        <taxon>Vertebrata</taxon>
        <taxon>Euteleostomi</taxon>
        <taxon>Mammalia</taxon>
        <taxon>Eutheria</taxon>
        <taxon>Euarchontoglires</taxon>
        <taxon>Primates</taxon>
        <taxon>Haplorrhini</taxon>
        <taxon>Catarrhini</taxon>
        <taxon>Hominidae</taxon>
        <taxon>Homo</taxon>
    </lineage>
</organism>
<accession>P20073</accession>
<accession>Q5F2H3</accession>
<accession>Q5T0M6</accession>
<accession>Q5T0M7</accession>
<feature type="chain" id="PRO_0000067499" description="Annexin A7">
    <location>
        <begin position="1"/>
        <end position="488"/>
    </location>
</feature>
<feature type="repeat" description="Annexin 1" evidence="1">
    <location>
        <begin position="185"/>
        <end position="256"/>
    </location>
</feature>
<feature type="repeat" description="Annexin 2" evidence="1">
    <location>
        <begin position="257"/>
        <end position="328"/>
    </location>
</feature>
<feature type="repeat" description="Annexin 3" evidence="1">
    <location>
        <begin position="340"/>
        <end position="412"/>
    </location>
</feature>
<feature type="repeat" description="Annexin 4" evidence="1">
    <location>
        <begin position="416"/>
        <end position="487"/>
    </location>
</feature>
<feature type="region of interest" description="Repeat-rich region">
    <location>
        <begin position="1"/>
        <end position="143"/>
    </location>
</feature>
<feature type="region of interest" description="Disordered" evidence="2">
    <location>
        <begin position="1"/>
        <end position="49"/>
    </location>
</feature>
<feature type="region of interest" description="3 X 5 AA tandem repeats of G-Y-P-P-X">
    <location>
        <begin position="5"/>
        <end position="20"/>
    </location>
</feature>
<feature type="region of interest" description="Disordered" evidence="2">
    <location>
        <begin position="71"/>
        <end position="143"/>
    </location>
</feature>
<feature type="compositionally biased region" description="Pro residues" evidence="2">
    <location>
        <begin position="1"/>
        <end position="18"/>
    </location>
</feature>
<feature type="compositionally biased region" description="Gly residues" evidence="2">
    <location>
        <begin position="89"/>
        <end position="102"/>
    </location>
</feature>
<feature type="modified residue" description="N6-acetyllysine" evidence="12">
    <location>
        <position position="233"/>
    </location>
</feature>
<feature type="splice variant" id="VSP_011843" description="In isoform 2." evidence="5 6 7 8 9 10">
    <location>
        <begin position="146"/>
        <end position="167"/>
    </location>
</feature>
<feature type="sequence variant" id="VAR_048253" description="In dbSNP:rs3750575.">
    <original>R</original>
    <variation>Q</variation>
    <location>
        <position position="441"/>
    </location>
</feature>
<reference key="1">
    <citation type="journal article" date="1989" name="Proc. Natl. Acad. Sci. U.S.A.">
        <title>Calcium channel activity of purified human synexin and structure of the human synexin gene.</title>
        <authorList>
            <person name="Burns A.L."/>
            <person name="Magendzo K."/>
            <person name="Shirvan A."/>
            <person name="Srivastava M."/>
            <person name="Rojas E."/>
            <person name="Alijani M.R."/>
            <person name="Pollard H.B."/>
        </authorList>
    </citation>
    <scope>NUCLEOTIDE SEQUENCE [MRNA] (ISOFORM 2)</scope>
    <scope>PARTIAL PROTEIN SEQUENCE</scope>
</reference>
<reference key="2">
    <citation type="journal article" date="1994" name="Biochemistry">
        <title>Divergent structure of the human synexin (annexin VII) gene and assignment to chromosome 10.</title>
        <authorList>
            <person name="Shirvan A."/>
            <person name="Srivastava M."/>
            <person name="Wang M.G."/>
            <person name="Cultraro C."/>
            <person name="Magendzo K."/>
            <person name="McBride O.W."/>
            <person name="Pollard H.B."/>
            <person name="Burns A.L."/>
        </authorList>
    </citation>
    <scope>NUCLEOTIDE SEQUENCE [MRNA] (ISOFORMS 1 AND 2)</scope>
</reference>
<reference key="3">
    <citation type="submission" date="2001-05" db="EMBL/GenBank/DDBJ databases">
        <title>Identification of immuno-peptidmics that are recognized by tumor-reactive CTL generated from TIL of colon cancer patients.</title>
        <authorList>
            <person name="Shichijo S."/>
            <person name="Itoh K."/>
        </authorList>
    </citation>
    <scope>NUCLEOTIDE SEQUENCE [LARGE SCALE MRNA] (ISOFORM 2)</scope>
    <source>
        <tissue>Colon adenocarcinoma</tissue>
    </source>
</reference>
<reference key="4">
    <citation type="submission" date="2003-05" db="EMBL/GenBank/DDBJ databases">
        <title>Cloning of human full-length CDSs in BD Creator(TM) system donor vector.</title>
        <authorList>
            <person name="Kalnine N."/>
            <person name="Chen X."/>
            <person name="Rolfs A."/>
            <person name="Halleck A."/>
            <person name="Hines L."/>
            <person name="Eisenstein S."/>
            <person name="Koundinya M."/>
            <person name="Raphael J."/>
            <person name="Moreira D."/>
            <person name="Kelley T."/>
            <person name="LaBaer J."/>
            <person name="Lin Y."/>
            <person name="Phelan M."/>
            <person name="Farmer A."/>
        </authorList>
    </citation>
    <scope>NUCLEOTIDE SEQUENCE [LARGE SCALE MRNA] (ISOFORM 2)</scope>
</reference>
<reference key="5">
    <citation type="submission" date="2004-05" db="EMBL/GenBank/DDBJ databases">
        <title>Cloning of human full open reading frames in Gateway(TM) system entry vector (pDONR201).</title>
        <authorList>
            <person name="Ebert L."/>
            <person name="Schick M."/>
            <person name="Neubert P."/>
            <person name="Schatten R."/>
            <person name="Henze S."/>
            <person name="Korn B."/>
        </authorList>
    </citation>
    <scope>NUCLEOTIDE SEQUENCE [LARGE SCALE MRNA] (ISOFORM 2)</scope>
</reference>
<reference key="6">
    <citation type="journal article" date="2004" name="Nature">
        <title>The DNA sequence and comparative analysis of human chromosome 10.</title>
        <authorList>
            <person name="Deloukas P."/>
            <person name="Earthrowl M.E."/>
            <person name="Grafham D.V."/>
            <person name="Rubenfield M."/>
            <person name="French L."/>
            <person name="Steward C.A."/>
            <person name="Sims S.K."/>
            <person name="Jones M.C."/>
            <person name="Searle S."/>
            <person name="Scott C."/>
            <person name="Howe K."/>
            <person name="Hunt S.E."/>
            <person name="Andrews T.D."/>
            <person name="Gilbert J.G.R."/>
            <person name="Swarbreck D."/>
            <person name="Ashurst J.L."/>
            <person name="Taylor A."/>
            <person name="Battles J."/>
            <person name="Bird C.P."/>
            <person name="Ainscough R."/>
            <person name="Almeida J.P."/>
            <person name="Ashwell R.I.S."/>
            <person name="Ambrose K.D."/>
            <person name="Babbage A.K."/>
            <person name="Bagguley C.L."/>
            <person name="Bailey J."/>
            <person name="Banerjee R."/>
            <person name="Bates K."/>
            <person name="Beasley H."/>
            <person name="Bray-Allen S."/>
            <person name="Brown A.J."/>
            <person name="Brown J.Y."/>
            <person name="Burford D.C."/>
            <person name="Burrill W."/>
            <person name="Burton J."/>
            <person name="Cahill P."/>
            <person name="Camire D."/>
            <person name="Carter N.P."/>
            <person name="Chapman J.C."/>
            <person name="Clark S.Y."/>
            <person name="Clarke G."/>
            <person name="Clee C.M."/>
            <person name="Clegg S."/>
            <person name="Corby N."/>
            <person name="Coulson A."/>
            <person name="Dhami P."/>
            <person name="Dutta I."/>
            <person name="Dunn M."/>
            <person name="Faulkner L."/>
            <person name="Frankish A."/>
            <person name="Frankland J.A."/>
            <person name="Garner P."/>
            <person name="Garnett J."/>
            <person name="Gribble S."/>
            <person name="Griffiths C."/>
            <person name="Grocock R."/>
            <person name="Gustafson E."/>
            <person name="Hammond S."/>
            <person name="Harley J.L."/>
            <person name="Hart E."/>
            <person name="Heath P.D."/>
            <person name="Ho T.P."/>
            <person name="Hopkins B."/>
            <person name="Horne J."/>
            <person name="Howden P.J."/>
            <person name="Huckle E."/>
            <person name="Hynds C."/>
            <person name="Johnson C."/>
            <person name="Johnson D."/>
            <person name="Kana A."/>
            <person name="Kay M."/>
            <person name="Kimberley A.M."/>
            <person name="Kershaw J.K."/>
            <person name="Kokkinaki M."/>
            <person name="Laird G.K."/>
            <person name="Lawlor S."/>
            <person name="Lee H.M."/>
            <person name="Leongamornlert D.A."/>
            <person name="Laird G."/>
            <person name="Lloyd C."/>
            <person name="Lloyd D.M."/>
            <person name="Loveland J."/>
            <person name="Lovell J."/>
            <person name="McLaren S."/>
            <person name="McLay K.E."/>
            <person name="McMurray A."/>
            <person name="Mashreghi-Mohammadi M."/>
            <person name="Matthews L."/>
            <person name="Milne S."/>
            <person name="Nickerson T."/>
            <person name="Nguyen M."/>
            <person name="Overton-Larty E."/>
            <person name="Palmer S.A."/>
            <person name="Pearce A.V."/>
            <person name="Peck A.I."/>
            <person name="Pelan S."/>
            <person name="Phillimore B."/>
            <person name="Porter K."/>
            <person name="Rice C.M."/>
            <person name="Rogosin A."/>
            <person name="Ross M.T."/>
            <person name="Sarafidou T."/>
            <person name="Sehra H.K."/>
            <person name="Shownkeen R."/>
            <person name="Skuce C.D."/>
            <person name="Smith M."/>
            <person name="Standring L."/>
            <person name="Sycamore N."/>
            <person name="Tester J."/>
            <person name="Thorpe A."/>
            <person name="Torcasso W."/>
            <person name="Tracey A."/>
            <person name="Tromans A."/>
            <person name="Tsolas J."/>
            <person name="Wall M."/>
            <person name="Walsh J."/>
            <person name="Wang H."/>
            <person name="Weinstock K."/>
            <person name="West A.P."/>
            <person name="Willey D.L."/>
            <person name="Whitehead S.L."/>
            <person name="Wilming L."/>
            <person name="Wray P.W."/>
            <person name="Young L."/>
            <person name="Chen Y."/>
            <person name="Lovering R.C."/>
            <person name="Moschonas N.K."/>
            <person name="Siebert R."/>
            <person name="Fechtel K."/>
            <person name="Bentley D."/>
            <person name="Durbin R.M."/>
            <person name="Hubbard T."/>
            <person name="Doucette-Stamm L."/>
            <person name="Beck S."/>
            <person name="Smith D.R."/>
            <person name="Rogers J."/>
        </authorList>
    </citation>
    <scope>NUCLEOTIDE SEQUENCE [LARGE SCALE GENOMIC DNA]</scope>
</reference>
<reference key="7">
    <citation type="submission" date="2005-07" db="EMBL/GenBank/DDBJ databases">
        <authorList>
            <person name="Mural R.J."/>
            <person name="Istrail S."/>
            <person name="Sutton G.G."/>
            <person name="Florea L."/>
            <person name="Halpern A.L."/>
            <person name="Mobarry C.M."/>
            <person name="Lippert R."/>
            <person name="Walenz B."/>
            <person name="Shatkay H."/>
            <person name="Dew I."/>
            <person name="Miller J.R."/>
            <person name="Flanigan M.J."/>
            <person name="Edwards N.J."/>
            <person name="Bolanos R."/>
            <person name="Fasulo D."/>
            <person name="Halldorsson B.V."/>
            <person name="Hannenhalli S."/>
            <person name="Turner R."/>
            <person name="Yooseph S."/>
            <person name="Lu F."/>
            <person name="Nusskern D.R."/>
            <person name="Shue B.C."/>
            <person name="Zheng X.H."/>
            <person name="Zhong F."/>
            <person name="Delcher A.L."/>
            <person name="Huson D.H."/>
            <person name="Kravitz S.A."/>
            <person name="Mouchard L."/>
            <person name="Reinert K."/>
            <person name="Remington K.A."/>
            <person name="Clark A.G."/>
            <person name="Waterman M.S."/>
            <person name="Eichler E.E."/>
            <person name="Adams M.D."/>
            <person name="Hunkapiller M.W."/>
            <person name="Myers E.W."/>
            <person name="Venter J.C."/>
        </authorList>
    </citation>
    <scope>NUCLEOTIDE SEQUENCE [LARGE SCALE GENOMIC DNA]</scope>
</reference>
<reference key="8">
    <citation type="journal article" date="2004" name="Genome Res.">
        <title>The status, quality, and expansion of the NIH full-length cDNA project: the Mammalian Gene Collection (MGC).</title>
        <authorList>
            <consortium name="The MGC Project Team"/>
        </authorList>
    </citation>
    <scope>NUCLEOTIDE SEQUENCE [LARGE SCALE MRNA] (ISOFORM 2)</scope>
    <source>
        <tissue>Pancreas</tissue>
    </source>
</reference>
<reference key="9">
    <citation type="journal article" date="1991" name="J. Biol. Chem.">
        <title>Alternative splicing of human synexin mRNA in brain, cardiac, and skeletal muscle alters the unique N-terminal domain.</title>
        <authorList>
            <person name="Magendzo K."/>
            <person name="Shirvan A."/>
            <person name="Cultraro C."/>
            <person name="Srivastava M."/>
            <person name="Pollard H.B."/>
            <person name="Burns A.L."/>
        </authorList>
    </citation>
    <scope>NUCLEOTIDE SEQUENCE [MRNA] OF 145-166 (ISOFORM 1)</scope>
    <scope>TISSUE SPECIFICITY</scope>
    <source>
        <tissue>Fibroblast</tissue>
    </source>
</reference>
<reference key="10">
    <citation type="journal article" date="2008" name="J. Biol. Chem.">
        <title>Identification of Alix-type and non-Alix-type ALG-2-binding sites in human phospholipid scramblase 3: differential binding to an alternatively spliced isoform and amino acid-substituted mutants.</title>
        <authorList>
            <person name="Shibata H."/>
            <person name="Suzuki H."/>
            <person name="Kakiuchi T."/>
            <person name="Inuzuka T."/>
            <person name="Yoshida H."/>
            <person name="Mizuno T."/>
            <person name="Maki M."/>
        </authorList>
    </citation>
    <scope>INTERACTION WITH PDCD6</scope>
</reference>
<reference key="11">
    <citation type="journal article" date="2009" name="Science">
        <title>Lysine acetylation targets protein complexes and co-regulates major cellular functions.</title>
        <authorList>
            <person name="Choudhary C."/>
            <person name="Kumar C."/>
            <person name="Gnad F."/>
            <person name="Nielsen M.L."/>
            <person name="Rehman M."/>
            <person name="Walther T.C."/>
            <person name="Olsen J.V."/>
            <person name="Mann M."/>
        </authorList>
    </citation>
    <scope>ACETYLATION [LARGE SCALE ANALYSIS] AT LYS-233</scope>
    <scope>IDENTIFICATION BY MASS SPECTROMETRY [LARGE SCALE ANALYSIS]</scope>
</reference>
<reference key="12">
    <citation type="journal article" date="2011" name="BMC Syst. Biol.">
        <title>Initial characterization of the human central proteome.</title>
        <authorList>
            <person name="Burkard T.R."/>
            <person name="Planyavsky M."/>
            <person name="Kaupe I."/>
            <person name="Breitwieser F.P."/>
            <person name="Buerckstuemmer T."/>
            <person name="Bennett K.L."/>
            <person name="Superti-Furga G."/>
            <person name="Colinge J."/>
        </authorList>
    </citation>
    <scope>IDENTIFICATION BY MASS SPECTROMETRY [LARGE SCALE ANALYSIS]</scope>
</reference>
<reference key="13">
    <citation type="journal article" date="2014" name="J. Proteomics">
        <title>An enzyme assisted RP-RPLC approach for in-depth analysis of human liver phosphoproteome.</title>
        <authorList>
            <person name="Bian Y."/>
            <person name="Song C."/>
            <person name="Cheng K."/>
            <person name="Dong M."/>
            <person name="Wang F."/>
            <person name="Huang J."/>
            <person name="Sun D."/>
            <person name="Wang L."/>
            <person name="Ye M."/>
            <person name="Zou H."/>
        </authorList>
    </citation>
    <scope>IDENTIFICATION BY MASS SPECTROMETRY [LARGE SCALE ANALYSIS]</scope>
    <source>
        <tissue>Liver</tissue>
    </source>
</reference>
<keyword id="KW-0002">3D-structure</keyword>
<keyword id="KW-0007">Acetylation</keyword>
<keyword id="KW-0025">Alternative splicing</keyword>
<keyword id="KW-0041">Annexin</keyword>
<keyword id="KW-0106">Calcium</keyword>
<keyword id="KW-0111">Calcium/phospholipid-binding</keyword>
<keyword id="KW-0903">Direct protein sequencing</keyword>
<keyword id="KW-1267">Proteomics identification</keyword>
<keyword id="KW-1185">Reference proteome</keyword>
<keyword id="KW-0677">Repeat</keyword>
<sequence>MSYPGYPPTGYPPFPGYPPAGQESSFPPSGQYPYPSGFPPMGGGAYPQVPSSGYPGAGGYPAPGGYPAPGGYPGAPQPGGAPSYPGVPPGQGFGVPPGGAGFSGYPQPPSQSYGGGPAQVPLPGGFPGGQMPSQYPGGQPTYPSQINTDSFSSYPVFSPVSLDYSSEPATVTQVTQGTIRPAANFDAIRDAEILRKAMKGFGTDEQAIVDVVANRSNDQRQKIKAAFKTSYGKDLIKDLKSELSGNMEELILALFMPPTYYDAWSLRKAMQGAGTQERVLIEILCTRTNQEIREIVRCYQSEFGRDLEKDIRSDTSGHFERLLVSMCQGNRDENQSINHQMAQEDAQRLYQAGEGRLGTDESCFNMILATRSFPQLRATMEAYSRMANRDLLSSVSREFSGYVESGLKTILQCALNRPAFFAERLYYAMKGAGTDDSTLVRIVVTRSEIDLVQIKQMFAQMYQKTLGTMIAGDTSGDYRRLLLAIVGQ</sequence>
<comment type="function">
    <text>Calcium/phospholipid-binding protein which promotes membrane fusion and is involved in exocytosis.</text>
</comment>
<comment type="subunit">
    <text evidence="4">Interacts with PDCD6.</text>
</comment>
<comment type="interaction">
    <interactant intactId="EBI-2338704">
        <id>P20073</id>
    </interactant>
    <interactant intactId="EBI-10816740">
        <id>P30626-1</id>
        <label>SRI</label>
    </interactant>
    <organismsDiffer>false</organismsDiffer>
    <experiments>2</experiments>
</comment>
<comment type="alternative products">
    <event type="alternative splicing"/>
    <isoform>
        <id>P20073-1</id>
        <name>1</name>
        <name>Annexin VIIb</name>
        <sequence type="displayed"/>
    </isoform>
    <isoform>
        <id>P20073-2</id>
        <name>2</name>
        <name>Annexin VIIa</name>
        <sequence type="described" ref="VSP_011843"/>
    </isoform>
</comment>
<comment type="tissue specificity">
    <text evidence="3">Isoform 1 is expressed in brain, heart and skeletal muscle. Isoform 2 is more abundant in liver, lung, kidney, spleen, fibroblasts and placenta.</text>
</comment>
<comment type="domain">
    <text>A pair of annexin repeats may form one binding site for calcium and phospholipid.</text>
</comment>
<comment type="similarity">
    <text evidence="1 11">Belongs to the annexin family.</text>
</comment>
<gene>
    <name type="primary">ANXA7</name>
    <name type="synonym">ANX7</name>
    <name type="synonym">SNX</name>
    <name type="ORF">OK/SW-cl.95</name>
</gene>
<name>ANXA7_HUMAN</name>
<protein>
    <recommendedName>
        <fullName>Annexin A7</fullName>
    </recommendedName>
    <alternativeName>
        <fullName>Annexin VII</fullName>
    </alternativeName>
    <alternativeName>
        <fullName>Annexin-7</fullName>
    </alternativeName>
    <alternativeName>
        <fullName>Synexin</fullName>
    </alternativeName>
</protein>
<evidence type="ECO:0000255" key="1">
    <source>
        <dbReference type="PROSITE-ProRule" id="PRU01245"/>
    </source>
</evidence>
<evidence type="ECO:0000256" key="2">
    <source>
        <dbReference type="SAM" id="MobiDB-lite"/>
    </source>
</evidence>
<evidence type="ECO:0000269" key="3">
    <source>
    </source>
</evidence>
<evidence type="ECO:0000269" key="4">
    <source>
    </source>
</evidence>
<evidence type="ECO:0000303" key="5">
    <source>
    </source>
</evidence>
<evidence type="ECO:0000303" key="6">
    <source>
    </source>
</evidence>
<evidence type="ECO:0000303" key="7">
    <source>
    </source>
</evidence>
<evidence type="ECO:0000303" key="8">
    <source ref="3"/>
</evidence>
<evidence type="ECO:0000303" key="9">
    <source ref="4"/>
</evidence>
<evidence type="ECO:0000303" key="10">
    <source ref="5"/>
</evidence>
<evidence type="ECO:0000305" key="11"/>
<evidence type="ECO:0007744" key="12">
    <source>
    </source>
</evidence>
<dbReference type="EMBL" id="J04543">
    <property type="protein sequence ID" value="AAA36616.1"/>
    <property type="molecule type" value="mRNA"/>
</dbReference>
<dbReference type="EMBL" id="AB062429">
    <property type="protein sequence ID" value="BAB93492.1"/>
    <property type="molecule type" value="mRNA"/>
</dbReference>
<dbReference type="EMBL" id="BT007187">
    <property type="protein sequence ID" value="AAP35851.1"/>
    <property type="molecule type" value="mRNA"/>
</dbReference>
<dbReference type="EMBL" id="CR407686">
    <property type="protein sequence ID" value="CAG28614.1"/>
    <property type="molecule type" value="mRNA"/>
</dbReference>
<dbReference type="EMBL" id="AL353731">
    <property type="status" value="NOT_ANNOTATED_CDS"/>
    <property type="molecule type" value="Genomic_DNA"/>
</dbReference>
<dbReference type="EMBL" id="AL512656">
    <property type="status" value="NOT_ANNOTATED_CDS"/>
    <property type="molecule type" value="Genomic_DNA"/>
</dbReference>
<dbReference type="EMBL" id="CH471083">
    <property type="protein sequence ID" value="EAW54493.1"/>
    <property type="molecule type" value="Genomic_DNA"/>
</dbReference>
<dbReference type="EMBL" id="CH471083">
    <property type="protein sequence ID" value="EAW54494.1"/>
    <property type="molecule type" value="Genomic_DNA"/>
</dbReference>
<dbReference type="EMBL" id="BC002632">
    <property type="protein sequence ID" value="AAH02632.1"/>
    <property type="molecule type" value="mRNA"/>
</dbReference>
<dbReference type="CCDS" id="CCDS7325.1">
    <molecule id="P20073-2"/>
</dbReference>
<dbReference type="CCDS" id="CCDS7326.1">
    <molecule id="P20073-1"/>
</dbReference>
<dbReference type="PIR" id="A54467">
    <property type="entry name" value="LUHU7"/>
</dbReference>
<dbReference type="RefSeq" id="NP_001147.1">
    <molecule id="P20073-2"/>
    <property type="nucleotide sequence ID" value="NM_001156.5"/>
</dbReference>
<dbReference type="RefSeq" id="NP_004025.1">
    <molecule id="P20073-1"/>
    <property type="nucleotide sequence ID" value="NM_004034.4"/>
</dbReference>
<dbReference type="RefSeq" id="XP_016871651.1">
    <molecule id="P20073-1"/>
    <property type="nucleotide sequence ID" value="XM_017016162.3"/>
</dbReference>
<dbReference type="RefSeq" id="XP_016871652.1">
    <property type="nucleotide sequence ID" value="XM_017016163.1"/>
</dbReference>
<dbReference type="PDB" id="8W5S">
    <property type="method" value="X-ray"/>
    <property type="resolution" value="2.12 A"/>
    <property type="chains" value="A/B/C=188-488"/>
</dbReference>
<dbReference type="PDBsum" id="8W5S"/>
<dbReference type="SMR" id="P20073"/>
<dbReference type="BioGRID" id="106807">
    <property type="interactions" value="185"/>
</dbReference>
<dbReference type="CORUM" id="P20073"/>
<dbReference type="ELM" id="P20073"/>
<dbReference type="FunCoup" id="P20073">
    <property type="interactions" value="1660"/>
</dbReference>
<dbReference type="IntAct" id="P20073">
    <property type="interactions" value="132"/>
</dbReference>
<dbReference type="MINT" id="P20073"/>
<dbReference type="STRING" id="9606.ENSP00000362010"/>
<dbReference type="GlyGen" id="P20073">
    <property type="glycosylation" value="1 site, 1 O-linked glycan (1 site)"/>
</dbReference>
<dbReference type="iPTMnet" id="P20073"/>
<dbReference type="MetOSite" id="P20073"/>
<dbReference type="PhosphoSitePlus" id="P20073"/>
<dbReference type="SwissPalm" id="P20073"/>
<dbReference type="BioMuta" id="ANXA7"/>
<dbReference type="DMDM" id="215274186"/>
<dbReference type="REPRODUCTION-2DPAGE" id="IPI00002460"/>
<dbReference type="CPTAC" id="CPTAC-1385"/>
<dbReference type="CPTAC" id="CPTAC-1386"/>
<dbReference type="CPTAC" id="CPTAC-1387"/>
<dbReference type="CPTAC" id="CPTAC-1388"/>
<dbReference type="CPTAC" id="CPTAC-1389"/>
<dbReference type="jPOST" id="P20073"/>
<dbReference type="MassIVE" id="P20073"/>
<dbReference type="PaxDb" id="9606-ENSP00000362010"/>
<dbReference type="PeptideAtlas" id="P20073"/>
<dbReference type="ProteomicsDB" id="53722">
    <molecule id="P20073-1"/>
</dbReference>
<dbReference type="ProteomicsDB" id="53723">
    <molecule id="P20073-2"/>
</dbReference>
<dbReference type="TopDownProteomics" id="P20073-1">
    <molecule id="P20073-1"/>
</dbReference>
<dbReference type="Antibodypedia" id="3809">
    <property type="antibodies" value="354 antibodies from 37 providers"/>
</dbReference>
<dbReference type="DNASU" id="310"/>
<dbReference type="Ensembl" id="ENST00000372919.8">
    <molecule id="P20073-1"/>
    <property type="protein sequence ID" value="ENSP00000362010.4"/>
    <property type="gene ID" value="ENSG00000138279.16"/>
</dbReference>
<dbReference type="Ensembl" id="ENST00000372921.10">
    <molecule id="P20073-2"/>
    <property type="protein sequence ID" value="ENSP00000362012.4"/>
    <property type="gene ID" value="ENSG00000138279.16"/>
</dbReference>
<dbReference type="GeneID" id="310"/>
<dbReference type="KEGG" id="hsa:310"/>
<dbReference type="MANE-Select" id="ENST00000372921.10">
    <molecule id="P20073-2"/>
    <property type="protein sequence ID" value="ENSP00000362012.4"/>
    <property type="RefSeq nucleotide sequence ID" value="NM_001156.5"/>
    <property type="RefSeq protein sequence ID" value="NP_001147.1"/>
</dbReference>
<dbReference type="UCSC" id="uc001jtz.3">
    <molecule id="P20073-1"/>
    <property type="organism name" value="human"/>
</dbReference>
<dbReference type="AGR" id="HGNC:545"/>
<dbReference type="CTD" id="310"/>
<dbReference type="DisGeNET" id="310"/>
<dbReference type="GeneCards" id="ANXA7"/>
<dbReference type="HGNC" id="HGNC:545">
    <property type="gene designation" value="ANXA7"/>
</dbReference>
<dbReference type="HPA" id="ENSG00000138279">
    <property type="expression patterns" value="Low tissue specificity"/>
</dbReference>
<dbReference type="MIM" id="186360">
    <property type="type" value="gene"/>
</dbReference>
<dbReference type="neXtProt" id="NX_P20073"/>
<dbReference type="OpenTargets" id="ENSG00000138279"/>
<dbReference type="PharmGKB" id="PA24835"/>
<dbReference type="VEuPathDB" id="HostDB:ENSG00000138279"/>
<dbReference type="eggNOG" id="KOG0819">
    <property type="taxonomic scope" value="Eukaryota"/>
</dbReference>
<dbReference type="GeneTree" id="ENSGT00940000155278"/>
<dbReference type="HOGENOM" id="CLU_025300_6_1_1"/>
<dbReference type="InParanoid" id="P20073"/>
<dbReference type="OMA" id="VRGPLMQ"/>
<dbReference type="OrthoDB" id="37886at2759"/>
<dbReference type="PAN-GO" id="P20073">
    <property type="GO annotations" value="3 GO annotations based on evolutionary models"/>
</dbReference>
<dbReference type="PhylomeDB" id="P20073"/>
<dbReference type="TreeFam" id="TF105452"/>
<dbReference type="PathwayCommons" id="P20073"/>
<dbReference type="SignaLink" id="P20073"/>
<dbReference type="BioGRID-ORCS" id="310">
    <property type="hits" value="17 hits in 1158 CRISPR screens"/>
</dbReference>
<dbReference type="CD-CODE" id="DEE660B4">
    <property type="entry name" value="Stress granule"/>
</dbReference>
<dbReference type="CD-CODE" id="FB4E32DD">
    <property type="entry name" value="Presynaptic clusters and postsynaptic densities"/>
</dbReference>
<dbReference type="ChiTaRS" id="ANXA7">
    <property type="organism name" value="human"/>
</dbReference>
<dbReference type="GeneWiki" id="ANXA7"/>
<dbReference type="GenomeRNAi" id="310"/>
<dbReference type="Pharos" id="P20073">
    <property type="development level" value="Tbio"/>
</dbReference>
<dbReference type="PRO" id="PR:P20073"/>
<dbReference type="Proteomes" id="UP000005640">
    <property type="component" value="Chromosome 10"/>
</dbReference>
<dbReference type="RNAct" id="P20073">
    <property type="molecule type" value="protein"/>
</dbReference>
<dbReference type="Bgee" id="ENSG00000138279">
    <property type="expression patterns" value="Expressed in oocyte and 213 other cell types or tissues"/>
</dbReference>
<dbReference type="ExpressionAtlas" id="P20073">
    <property type="expression patterns" value="baseline and differential"/>
</dbReference>
<dbReference type="GO" id="GO:0062023">
    <property type="term" value="C:collagen-containing extracellular matrix"/>
    <property type="evidence" value="ECO:0007005"/>
    <property type="project" value="BHF-UCL"/>
</dbReference>
<dbReference type="GO" id="GO:0005737">
    <property type="term" value="C:cytoplasm"/>
    <property type="evidence" value="ECO:0000318"/>
    <property type="project" value="GO_Central"/>
</dbReference>
<dbReference type="GO" id="GO:0005789">
    <property type="term" value="C:endoplasmic reticulum membrane"/>
    <property type="evidence" value="ECO:0000314"/>
    <property type="project" value="BHF-UCL"/>
</dbReference>
<dbReference type="GO" id="GO:0070062">
    <property type="term" value="C:extracellular exosome"/>
    <property type="evidence" value="ECO:0007005"/>
    <property type="project" value="UniProtKB"/>
</dbReference>
<dbReference type="GO" id="GO:0016020">
    <property type="term" value="C:membrane"/>
    <property type="evidence" value="ECO:0007005"/>
    <property type="project" value="UniProtKB"/>
</dbReference>
<dbReference type="GO" id="GO:0005634">
    <property type="term" value="C:nucleus"/>
    <property type="evidence" value="ECO:0000314"/>
    <property type="project" value="BHF-UCL"/>
</dbReference>
<dbReference type="GO" id="GO:0005886">
    <property type="term" value="C:plasma membrane"/>
    <property type="evidence" value="ECO:0000318"/>
    <property type="project" value="GO_Central"/>
</dbReference>
<dbReference type="GO" id="GO:0012506">
    <property type="term" value="C:vesicle membrane"/>
    <property type="evidence" value="ECO:0000318"/>
    <property type="project" value="GO_Central"/>
</dbReference>
<dbReference type="GO" id="GO:0005509">
    <property type="term" value="F:calcium ion binding"/>
    <property type="evidence" value="ECO:0007669"/>
    <property type="project" value="InterPro"/>
</dbReference>
<dbReference type="GO" id="GO:0005544">
    <property type="term" value="F:calcium-dependent phospholipid binding"/>
    <property type="evidence" value="ECO:0000318"/>
    <property type="project" value="GO_Central"/>
</dbReference>
<dbReference type="GO" id="GO:0048306">
    <property type="term" value="F:calcium-dependent protein binding"/>
    <property type="evidence" value="ECO:0000353"/>
    <property type="project" value="UniProtKB"/>
</dbReference>
<dbReference type="GO" id="GO:0005178">
    <property type="term" value="F:integrin binding"/>
    <property type="evidence" value="ECO:0000353"/>
    <property type="project" value="UniProtKB"/>
</dbReference>
<dbReference type="GO" id="GO:0001786">
    <property type="term" value="F:phosphatidylserine binding"/>
    <property type="evidence" value="ECO:0000318"/>
    <property type="project" value="GO_Central"/>
</dbReference>
<dbReference type="GO" id="GO:0003723">
    <property type="term" value="F:RNA binding"/>
    <property type="evidence" value="ECO:0007005"/>
    <property type="project" value="UniProtKB"/>
</dbReference>
<dbReference type="GO" id="GO:0006914">
    <property type="term" value="P:autophagy"/>
    <property type="evidence" value="ECO:0000315"/>
    <property type="project" value="UniProtKB"/>
</dbReference>
<dbReference type="GO" id="GO:0030855">
    <property type="term" value="P:epithelial cell differentiation"/>
    <property type="evidence" value="ECO:0000270"/>
    <property type="project" value="UniProtKB"/>
</dbReference>
<dbReference type="GO" id="GO:0061025">
    <property type="term" value="P:membrane fusion"/>
    <property type="evidence" value="ECO:0007669"/>
    <property type="project" value="Ensembl"/>
</dbReference>
<dbReference type="GO" id="GO:0010629">
    <property type="term" value="P:negative regulation of gene expression"/>
    <property type="evidence" value="ECO:0000315"/>
    <property type="project" value="UniProtKB"/>
</dbReference>
<dbReference type="GO" id="GO:0051592">
    <property type="term" value="P:response to calcium ion"/>
    <property type="evidence" value="ECO:0007669"/>
    <property type="project" value="Ensembl"/>
</dbReference>
<dbReference type="FunFam" id="1.10.220.10:FF:000001">
    <property type="entry name" value="Annexin"/>
    <property type="match status" value="1"/>
</dbReference>
<dbReference type="FunFam" id="1.10.220.10:FF:000002">
    <property type="entry name" value="Annexin"/>
    <property type="match status" value="1"/>
</dbReference>
<dbReference type="FunFam" id="1.10.220.10:FF:000003">
    <property type="entry name" value="Annexin"/>
    <property type="match status" value="1"/>
</dbReference>
<dbReference type="FunFam" id="1.10.220.10:FF:000004">
    <property type="entry name" value="Annexin"/>
    <property type="match status" value="1"/>
</dbReference>
<dbReference type="Gene3D" id="1.10.220.10">
    <property type="entry name" value="Annexin"/>
    <property type="match status" value="4"/>
</dbReference>
<dbReference type="InterPro" id="IPR001464">
    <property type="entry name" value="Annexin"/>
</dbReference>
<dbReference type="InterPro" id="IPR018502">
    <property type="entry name" value="Annexin_repeat"/>
</dbReference>
<dbReference type="InterPro" id="IPR018252">
    <property type="entry name" value="Annexin_repeat_CS"/>
</dbReference>
<dbReference type="InterPro" id="IPR037104">
    <property type="entry name" value="Annexin_sf"/>
</dbReference>
<dbReference type="PANTHER" id="PTHR10502">
    <property type="entry name" value="ANNEXIN"/>
    <property type="match status" value="1"/>
</dbReference>
<dbReference type="PANTHER" id="PTHR10502:SF239">
    <property type="entry name" value="ANNEXIN A7"/>
    <property type="match status" value="1"/>
</dbReference>
<dbReference type="Pfam" id="PF00191">
    <property type="entry name" value="Annexin"/>
    <property type="match status" value="4"/>
</dbReference>
<dbReference type="PRINTS" id="PR00196">
    <property type="entry name" value="ANNEXIN"/>
</dbReference>
<dbReference type="PRINTS" id="PR01871">
    <property type="entry name" value="ANNEXINVII"/>
</dbReference>
<dbReference type="SMART" id="SM00335">
    <property type="entry name" value="ANX"/>
    <property type="match status" value="4"/>
</dbReference>
<dbReference type="SUPFAM" id="SSF47874">
    <property type="entry name" value="Annexin"/>
    <property type="match status" value="1"/>
</dbReference>
<dbReference type="PROSITE" id="PS00223">
    <property type="entry name" value="ANNEXIN_1"/>
    <property type="match status" value="4"/>
</dbReference>
<dbReference type="PROSITE" id="PS51897">
    <property type="entry name" value="ANNEXIN_2"/>
    <property type="match status" value="4"/>
</dbReference>